<feature type="chain" id="PRO_0000277190" description="DNA-directed RNA polymerase subunit beta''">
    <location>
        <begin position="1"/>
        <end position="1391"/>
    </location>
</feature>
<feature type="binding site" evidence="1">
    <location>
        <position position="220"/>
    </location>
    <ligand>
        <name>Zn(2+)</name>
        <dbReference type="ChEBI" id="CHEBI:29105"/>
    </ligand>
</feature>
<feature type="binding site" evidence="1">
    <location>
        <position position="291"/>
    </location>
    <ligand>
        <name>Zn(2+)</name>
        <dbReference type="ChEBI" id="CHEBI:29105"/>
    </ligand>
</feature>
<feature type="binding site" evidence="1">
    <location>
        <position position="298"/>
    </location>
    <ligand>
        <name>Zn(2+)</name>
        <dbReference type="ChEBI" id="CHEBI:29105"/>
    </ligand>
</feature>
<feature type="binding site" evidence="1">
    <location>
        <position position="301"/>
    </location>
    <ligand>
        <name>Zn(2+)</name>
        <dbReference type="ChEBI" id="CHEBI:29105"/>
    </ligand>
</feature>
<keyword id="KW-0150">Chloroplast</keyword>
<keyword id="KW-0240">DNA-directed RNA polymerase</keyword>
<keyword id="KW-0479">Metal-binding</keyword>
<keyword id="KW-0548">Nucleotidyltransferase</keyword>
<keyword id="KW-0934">Plastid</keyword>
<keyword id="KW-0804">Transcription</keyword>
<keyword id="KW-0808">Transferase</keyword>
<keyword id="KW-0862">Zinc</keyword>
<accession>A0ZZ25</accession>
<evidence type="ECO:0000255" key="1">
    <source>
        <dbReference type="HAMAP-Rule" id="MF_01324"/>
    </source>
</evidence>
<reference key="1">
    <citation type="journal article" date="2006" name="Genes Genet. Syst.">
        <title>Complete nucleotide sequence of the cotton (Gossypium barbadense L.) chloroplast genome with a comparative analysis of sequences among 9 dicot plants.</title>
        <authorList>
            <person name="Ibrahim R.I.H."/>
            <person name="Azuma J."/>
            <person name="Sakamoto M."/>
        </authorList>
    </citation>
    <scope>NUCLEOTIDE SEQUENCE [LARGE SCALE GENOMIC DNA]</scope>
</reference>
<dbReference type="EC" id="2.7.7.6" evidence="1"/>
<dbReference type="EMBL" id="AP009123">
    <property type="protein sequence ID" value="BAF41237.1"/>
    <property type="molecule type" value="Genomic_DNA"/>
</dbReference>
<dbReference type="RefSeq" id="YP_913177.1">
    <property type="nucleotide sequence ID" value="NC_008641.1"/>
</dbReference>
<dbReference type="SMR" id="A0ZZ25"/>
<dbReference type="GeneID" id="4575247"/>
<dbReference type="GO" id="GO:0009507">
    <property type="term" value="C:chloroplast"/>
    <property type="evidence" value="ECO:0007669"/>
    <property type="project" value="UniProtKB-SubCell"/>
</dbReference>
<dbReference type="GO" id="GO:0000428">
    <property type="term" value="C:DNA-directed RNA polymerase complex"/>
    <property type="evidence" value="ECO:0007669"/>
    <property type="project" value="UniProtKB-KW"/>
</dbReference>
<dbReference type="GO" id="GO:0005739">
    <property type="term" value="C:mitochondrion"/>
    <property type="evidence" value="ECO:0007669"/>
    <property type="project" value="GOC"/>
</dbReference>
<dbReference type="GO" id="GO:0003677">
    <property type="term" value="F:DNA binding"/>
    <property type="evidence" value="ECO:0007669"/>
    <property type="project" value="UniProtKB-UniRule"/>
</dbReference>
<dbReference type="GO" id="GO:0003899">
    <property type="term" value="F:DNA-directed RNA polymerase activity"/>
    <property type="evidence" value="ECO:0007669"/>
    <property type="project" value="UniProtKB-UniRule"/>
</dbReference>
<dbReference type="GO" id="GO:0008270">
    <property type="term" value="F:zinc ion binding"/>
    <property type="evidence" value="ECO:0007669"/>
    <property type="project" value="UniProtKB-UniRule"/>
</dbReference>
<dbReference type="GO" id="GO:0006351">
    <property type="term" value="P:DNA-templated transcription"/>
    <property type="evidence" value="ECO:0007669"/>
    <property type="project" value="UniProtKB-UniRule"/>
</dbReference>
<dbReference type="CDD" id="cd02655">
    <property type="entry name" value="RNAP_beta'_C"/>
    <property type="match status" value="1"/>
</dbReference>
<dbReference type="FunFam" id="1.10.132.30:FF:000002">
    <property type="entry name" value="DNA-directed RNA polymerase subunit beta"/>
    <property type="match status" value="1"/>
</dbReference>
<dbReference type="FunFam" id="1.10.1790.20:FF:000002">
    <property type="entry name" value="DNA-directed RNA polymerase subunit beta"/>
    <property type="match status" value="1"/>
</dbReference>
<dbReference type="Gene3D" id="1.10.132.30">
    <property type="match status" value="1"/>
</dbReference>
<dbReference type="Gene3D" id="1.10.150.390">
    <property type="match status" value="1"/>
</dbReference>
<dbReference type="Gene3D" id="1.10.1790.20">
    <property type="match status" value="1"/>
</dbReference>
<dbReference type="Gene3D" id="1.10.274.100">
    <property type="entry name" value="RNA polymerase Rpb1, domain 3"/>
    <property type="match status" value="1"/>
</dbReference>
<dbReference type="HAMAP" id="MF_01324">
    <property type="entry name" value="RNApol_bact_RpoC2"/>
    <property type="match status" value="1"/>
</dbReference>
<dbReference type="InterPro" id="IPR012756">
    <property type="entry name" value="DNA-dir_RpoC2_beta_pp"/>
</dbReference>
<dbReference type="InterPro" id="IPR050254">
    <property type="entry name" value="RNA_pol_beta''_euk"/>
</dbReference>
<dbReference type="InterPro" id="IPR042102">
    <property type="entry name" value="RNA_pol_Rpb1_3_sf"/>
</dbReference>
<dbReference type="InterPro" id="IPR007083">
    <property type="entry name" value="RNA_pol_Rpb1_4"/>
</dbReference>
<dbReference type="InterPro" id="IPR007081">
    <property type="entry name" value="RNA_pol_Rpb1_5"/>
</dbReference>
<dbReference type="InterPro" id="IPR038120">
    <property type="entry name" value="Rpb1_funnel_sf"/>
</dbReference>
<dbReference type="NCBIfam" id="TIGR02388">
    <property type="entry name" value="rpoC2_cyan"/>
    <property type="match status" value="1"/>
</dbReference>
<dbReference type="PANTHER" id="PTHR34995">
    <property type="entry name" value="DNA-DIRECTED RNA POLYMERASE SUBUNIT BETA"/>
    <property type="match status" value="1"/>
</dbReference>
<dbReference type="PANTHER" id="PTHR34995:SF1">
    <property type="entry name" value="DNA-DIRECTED RNA POLYMERASE SUBUNIT BETA"/>
    <property type="match status" value="1"/>
</dbReference>
<dbReference type="Pfam" id="PF05000">
    <property type="entry name" value="RNA_pol_Rpb1_4"/>
    <property type="match status" value="1"/>
</dbReference>
<dbReference type="Pfam" id="PF04998">
    <property type="entry name" value="RNA_pol_Rpb1_5"/>
    <property type="match status" value="2"/>
</dbReference>
<dbReference type="SUPFAM" id="SSF64484">
    <property type="entry name" value="beta and beta-prime subunits of DNA dependent RNA-polymerase"/>
    <property type="match status" value="1"/>
</dbReference>
<comment type="function">
    <text evidence="1">DNA-dependent RNA polymerase catalyzes the transcription of DNA into RNA using the four ribonucleoside triphosphates as substrates.</text>
</comment>
<comment type="catalytic activity">
    <reaction evidence="1">
        <text>RNA(n) + a ribonucleoside 5'-triphosphate = RNA(n+1) + diphosphate</text>
        <dbReference type="Rhea" id="RHEA:21248"/>
        <dbReference type="Rhea" id="RHEA-COMP:14527"/>
        <dbReference type="Rhea" id="RHEA-COMP:17342"/>
        <dbReference type="ChEBI" id="CHEBI:33019"/>
        <dbReference type="ChEBI" id="CHEBI:61557"/>
        <dbReference type="ChEBI" id="CHEBI:140395"/>
        <dbReference type="EC" id="2.7.7.6"/>
    </reaction>
</comment>
<comment type="cofactor">
    <cofactor evidence="1">
        <name>Zn(2+)</name>
        <dbReference type="ChEBI" id="CHEBI:29105"/>
    </cofactor>
    <text evidence="1">Binds 1 Zn(2+) ion per subunit.</text>
</comment>
<comment type="subunit">
    <text evidence="1">In plastids the minimal PEP RNA polymerase catalytic core is composed of four subunits: alpha, beta, beta', and beta''. When a (nuclear-encoded) sigma factor is associated with the core the holoenzyme is formed, which can initiate transcription.</text>
</comment>
<comment type="subcellular location">
    <subcellularLocation>
        <location evidence="1">Plastid</location>
        <location evidence="1">Chloroplast</location>
    </subcellularLocation>
</comment>
<comment type="similarity">
    <text evidence="1">Belongs to the RNA polymerase beta' chain family. RpoC2 subfamily.</text>
</comment>
<geneLocation type="chloroplast"/>
<organism>
    <name type="scientific">Gossypium barbadense</name>
    <name type="common">Sea Island cotton</name>
    <name type="synonym">Hibiscus barbadensis</name>
    <dbReference type="NCBI Taxonomy" id="3634"/>
    <lineage>
        <taxon>Eukaryota</taxon>
        <taxon>Viridiplantae</taxon>
        <taxon>Streptophyta</taxon>
        <taxon>Embryophyta</taxon>
        <taxon>Tracheophyta</taxon>
        <taxon>Spermatophyta</taxon>
        <taxon>Magnoliopsida</taxon>
        <taxon>eudicotyledons</taxon>
        <taxon>Gunneridae</taxon>
        <taxon>Pentapetalae</taxon>
        <taxon>rosids</taxon>
        <taxon>malvids</taxon>
        <taxon>Malvales</taxon>
        <taxon>Malvaceae</taxon>
        <taxon>Malvoideae</taxon>
        <taxon>Gossypium</taxon>
    </lineage>
</organism>
<sequence>MAERANLVFHNKVIDGTAIKRLISRLIDHFGMAYTSHILDQVKALGFQQATATSISLGIDDLLTIPSKGWLVQDAEQQSLILEKHHHFGNVHAVEKLRQSIEIWYATSEYLRQEMNPNFRMTDPFNPVHIMSFSGARGNASQVHQLVGMRGLMSDPQGQMIDLPIQSNLREGLSLTEYIISCYGARKGVVDTAVLTSDAGYLTRRLVEVVQHIVVRRTDCGTTRGISVSPQKRTLPERIFIQTLIGRVLADDIYMGPRCIAIRNQDIGLGLVDRFRAFRTQPISIRTPFTCRSTSWICRLCYGRSPTHGDLVELGEAVGIIAGQSIGEPGTQLTLRTFHTGGVFTGGTAEHVRAPFNGKIKFNEDLVHPTRTRHGHPAFLCYRDLYVIIESEDIIHKVTIPPKSFLLVQNDQYVESEQVIAEIRAGTYTLNLKERVRKHIYSDSEGEMHWSTDVYHSPEYTYSNVHLLPKTSHLWILSGGSYKFSVVPFSLHKDQDQINIHYLSAERRYISRFSVNNDQVRHNLFSSDFSDEKEERIYDYSELNRIIGTGHCDFIYSAILHENADLLAKRRRNRFIIPFQLIQDQEKELMLHSHSGISMEIPINGIFRRKGILAFFDDPRYRRKSSGITKYGTLGAHSIVKREDVIEYRGVKKVKPKYQMKVDRFFFIPEEVHILSESSSIMVRNNSIIGVDTPITLNTRSQVGGLVRVERKKKRIELKIFSGNIYFPGERDKISRHSGILIPPGTGKTNSKESKKLKNWIYVQRITPTKKKYFVLVRPVTPYEIPDGLNLATLFPQDPFQEKDNMQLRAVNYILYGNGKPTRRISDTSIQLVRTCLVLSWDQDNKSSFAEEVCASFVEVRTNGLIRDFLRIDLVKSHIFYIRKRNDPSGSELISDNRSDRTNKNPFYSIYSNARIQQSFSQNHGTIHTLLNRNKESQSLIILSASNCFRMGPFNDVKYHNVIKQSIKKDPLIPIKNLLGPLGTAPKIANFYSSFYPLITHNQTSVAKYFELDNLKQAFQVLNYYLIAENGRIYNFDPCRNIFLNAVNLNWYFPHHHYNYCEETSTIISLGQFICENVCIAKSGPRLKSGQVFIVQADSIVIRSAKPYLATPGATVHGHYGETLYEGDTLVTFIYEKSRSGDITQGLPKVEQVLEVRSIDSISMNLEKRIEGWNECITRILGIPWGFVIGAELTIVQSRLSLVNKIQKVYRSQGVQIHNRHIEIIVRQITSKVLVSEDGMSNVFLPGELIGLLRAERTGRALEEAICYRAVLLGITRASLNTQSFISEASFQETARVLAKAALRGRIDWLKGLKENVVLGGMIPAGTGFKGLVHRSRQHNNILLETKKKNFFGGEMRDIFFHHRELFDSCFSNNLHDTSGRSFIGIEFNDS</sequence>
<gene>
    <name evidence="1" type="primary">rpoC2</name>
</gene>
<proteinExistence type="inferred from homology"/>
<name>RPOC2_GOSBA</name>
<protein>
    <recommendedName>
        <fullName evidence="1">DNA-directed RNA polymerase subunit beta''</fullName>
        <ecNumber evidence="1">2.7.7.6</ecNumber>
    </recommendedName>
    <alternativeName>
        <fullName evidence="1">PEP</fullName>
    </alternativeName>
    <alternativeName>
        <fullName evidence="1">Plastid-encoded RNA polymerase subunit beta''</fullName>
        <shortName evidence="1">RNA polymerase subunit beta''</shortName>
    </alternativeName>
</protein>